<sequence>MSENTTATTRARRKVREGLVVSDKMDKTVVVEVEDRVKHGLYGKIMRRTSKLKVHDEQNSAGIGDRVLIMETRPLSATKRWRLVEILEKAK</sequence>
<keyword id="KW-1185">Reference proteome</keyword>
<keyword id="KW-0687">Ribonucleoprotein</keyword>
<keyword id="KW-0689">Ribosomal protein</keyword>
<keyword id="KW-0694">RNA-binding</keyword>
<keyword id="KW-0699">rRNA-binding</keyword>
<protein>
    <recommendedName>
        <fullName evidence="1">Small ribosomal subunit protein uS17</fullName>
    </recommendedName>
    <alternativeName>
        <fullName evidence="2">30S ribosomal protein S17</fullName>
    </alternativeName>
</protein>
<accession>A4XBN7</accession>
<feature type="chain" id="PRO_1000086855" description="Small ribosomal subunit protein uS17">
    <location>
        <begin position="1"/>
        <end position="91"/>
    </location>
</feature>
<name>RS17_SALTO</name>
<dbReference type="EMBL" id="CP000667">
    <property type="protein sequence ID" value="ABP56344.1"/>
    <property type="molecule type" value="Genomic_DNA"/>
</dbReference>
<dbReference type="RefSeq" id="WP_012015117.1">
    <property type="nucleotide sequence ID" value="NC_009380.1"/>
</dbReference>
<dbReference type="SMR" id="A4XBN7"/>
<dbReference type="STRING" id="369723.Strop_3914"/>
<dbReference type="KEGG" id="stp:Strop_3914"/>
<dbReference type="PATRIC" id="fig|369723.5.peg.4040"/>
<dbReference type="eggNOG" id="COG0186">
    <property type="taxonomic scope" value="Bacteria"/>
</dbReference>
<dbReference type="HOGENOM" id="CLU_073626_1_0_11"/>
<dbReference type="Proteomes" id="UP000000235">
    <property type="component" value="Chromosome"/>
</dbReference>
<dbReference type="GO" id="GO:0022627">
    <property type="term" value="C:cytosolic small ribosomal subunit"/>
    <property type="evidence" value="ECO:0007669"/>
    <property type="project" value="TreeGrafter"/>
</dbReference>
<dbReference type="GO" id="GO:0019843">
    <property type="term" value="F:rRNA binding"/>
    <property type="evidence" value="ECO:0007669"/>
    <property type="project" value="UniProtKB-UniRule"/>
</dbReference>
<dbReference type="GO" id="GO:0003735">
    <property type="term" value="F:structural constituent of ribosome"/>
    <property type="evidence" value="ECO:0007669"/>
    <property type="project" value="InterPro"/>
</dbReference>
<dbReference type="GO" id="GO:0006412">
    <property type="term" value="P:translation"/>
    <property type="evidence" value="ECO:0007669"/>
    <property type="project" value="UniProtKB-UniRule"/>
</dbReference>
<dbReference type="CDD" id="cd00364">
    <property type="entry name" value="Ribosomal_uS17"/>
    <property type="match status" value="1"/>
</dbReference>
<dbReference type="Gene3D" id="2.40.50.140">
    <property type="entry name" value="Nucleic acid-binding proteins"/>
    <property type="match status" value="1"/>
</dbReference>
<dbReference type="HAMAP" id="MF_01345_B">
    <property type="entry name" value="Ribosomal_uS17_B"/>
    <property type="match status" value="1"/>
</dbReference>
<dbReference type="InterPro" id="IPR012340">
    <property type="entry name" value="NA-bd_OB-fold"/>
</dbReference>
<dbReference type="InterPro" id="IPR000266">
    <property type="entry name" value="Ribosomal_uS17"/>
</dbReference>
<dbReference type="InterPro" id="IPR019984">
    <property type="entry name" value="Ribosomal_uS17_bact/chlr"/>
</dbReference>
<dbReference type="InterPro" id="IPR019979">
    <property type="entry name" value="Ribosomal_uS17_CS"/>
</dbReference>
<dbReference type="NCBIfam" id="NF004123">
    <property type="entry name" value="PRK05610.1"/>
    <property type="match status" value="1"/>
</dbReference>
<dbReference type="NCBIfam" id="TIGR03635">
    <property type="entry name" value="uS17_bact"/>
    <property type="match status" value="1"/>
</dbReference>
<dbReference type="PANTHER" id="PTHR10744">
    <property type="entry name" value="40S RIBOSOMAL PROTEIN S11 FAMILY MEMBER"/>
    <property type="match status" value="1"/>
</dbReference>
<dbReference type="PANTHER" id="PTHR10744:SF1">
    <property type="entry name" value="SMALL RIBOSOMAL SUBUNIT PROTEIN US17M"/>
    <property type="match status" value="1"/>
</dbReference>
<dbReference type="Pfam" id="PF00366">
    <property type="entry name" value="Ribosomal_S17"/>
    <property type="match status" value="1"/>
</dbReference>
<dbReference type="PRINTS" id="PR00973">
    <property type="entry name" value="RIBOSOMALS17"/>
</dbReference>
<dbReference type="SUPFAM" id="SSF50249">
    <property type="entry name" value="Nucleic acid-binding proteins"/>
    <property type="match status" value="1"/>
</dbReference>
<dbReference type="PROSITE" id="PS00056">
    <property type="entry name" value="RIBOSOMAL_S17"/>
    <property type="match status" value="1"/>
</dbReference>
<evidence type="ECO:0000255" key="1">
    <source>
        <dbReference type="HAMAP-Rule" id="MF_01345"/>
    </source>
</evidence>
<evidence type="ECO:0000305" key="2"/>
<reference key="1">
    <citation type="journal article" date="2007" name="Proc. Natl. Acad. Sci. U.S.A.">
        <title>Genome sequencing reveals complex secondary metabolome in the marine actinomycete Salinispora tropica.</title>
        <authorList>
            <person name="Udwary D.W."/>
            <person name="Zeigler L."/>
            <person name="Asolkar R.N."/>
            <person name="Singan V."/>
            <person name="Lapidus A."/>
            <person name="Fenical W."/>
            <person name="Jensen P.R."/>
            <person name="Moore B.S."/>
        </authorList>
    </citation>
    <scope>NUCLEOTIDE SEQUENCE [LARGE SCALE GENOMIC DNA]</scope>
    <source>
        <strain>ATCC BAA-916 / DSM 44818 / JCM 13857 / NBRC 105044 / CNB-440</strain>
    </source>
</reference>
<gene>
    <name evidence="1" type="primary">rpsQ</name>
    <name type="ordered locus">Strop_3914</name>
</gene>
<proteinExistence type="inferred from homology"/>
<organism>
    <name type="scientific">Salinispora tropica (strain ATCC BAA-916 / DSM 44818 / JCM 13857 / NBRC 105044 / CNB-440)</name>
    <dbReference type="NCBI Taxonomy" id="369723"/>
    <lineage>
        <taxon>Bacteria</taxon>
        <taxon>Bacillati</taxon>
        <taxon>Actinomycetota</taxon>
        <taxon>Actinomycetes</taxon>
        <taxon>Micromonosporales</taxon>
        <taxon>Micromonosporaceae</taxon>
        <taxon>Salinispora</taxon>
    </lineage>
</organism>
<comment type="function">
    <text evidence="1">One of the primary rRNA binding proteins, it binds specifically to the 5'-end of 16S ribosomal RNA.</text>
</comment>
<comment type="subunit">
    <text evidence="1">Part of the 30S ribosomal subunit.</text>
</comment>
<comment type="similarity">
    <text evidence="1">Belongs to the universal ribosomal protein uS17 family.</text>
</comment>